<sequence>MSAPTHTHSPLYLGLMSGTSADGIDAALVRFDDASHRRCELVAGITVGWEPQLREALVALGQGAEQMAIDRLGRLDAQVGLAFADAANQLIAEAGVAREQIRAIGSHGQTIRHRPQADPAFTWQIGDASRIAEHTGITTAADFRRRDVAAGGQGAPLMPAFHLAMLGASDEDRAVLNLGGIGNLTLIPRDGAVLGFDTGPANALLDSWCQQHRGTPFDADGAFAASGKVDAALLHALLADPWFALPPPKSTGREQFHLAWALQAMGTATLRPADVQATLLELTAATVADALLRHQPTTRRVLVCGGGVRNPVLLARLAARLPGVVVESSARHGLDPDYLEAMGFAWLAAELLAGRPANLPSVTGAAGPRLLGAIYPA</sequence>
<organism>
    <name type="scientific">Xanthomonas campestris pv. campestris (strain 8004)</name>
    <dbReference type="NCBI Taxonomy" id="314565"/>
    <lineage>
        <taxon>Bacteria</taxon>
        <taxon>Pseudomonadati</taxon>
        <taxon>Pseudomonadota</taxon>
        <taxon>Gammaproteobacteria</taxon>
        <taxon>Lysobacterales</taxon>
        <taxon>Lysobacteraceae</taxon>
        <taxon>Xanthomonas</taxon>
    </lineage>
</organism>
<name>ANMK_XANC8</name>
<proteinExistence type="inferred from homology"/>
<accession>Q4UPQ7</accession>
<evidence type="ECO:0000255" key="1">
    <source>
        <dbReference type="HAMAP-Rule" id="MF_01270"/>
    </source>
</evidence>
<keyword id="KW-0067">ATP-binding</keyword>
<keyword id="KW-0119">Carbohydrate metabolism</keyword>
<keyword id="KW-0418">Kinase</keyword>
<keyword id="KW-0547">Nucleotide-binding</keyword>
<keyword id="KW-0808">Transferase</keyword>
<dbReference type="EC" id="2.7.1.170" evidence="1"/>
<dbReference type="EMBL" id="CP000050">
    <property type="protein sequence ID" value="AAY50966.1"/>
    <property type="molecule type" value="Genomic_DNA"/>
</dbReference>
<dbReference type="RefSeq" id="WP_011038918.1">
    <property type="nucleotide sequence ID" value="NZ_CP155948.1"/>
</dbReference>
<dbReference type="SMR" id="Q4UPQ7"/>
<dbReference type="KEGG" id="xcb:XC_3927"/>
<dbReference type="HOGENOM" id="CLU_038782_0_0_6"/>
<dbReference type="UniPathway" id="UPA00343"/>
<dbReference type="UniPathway" id="UPA00544"/>
<dbReference type="Proteomes" id="UP000000420">
    <property type="component" value="Chromosome"/>
</dbReference>
<dbReference type="GO" id="GO:0005524">
    <property type="term" value="F:ATP binding"/>
    <property type="evidence" value="ECO:0007669"/>
    <property type="project" value="UniProtKB-UniRule"/>
</dbReference>
<dbReference type="GO" id="GO:0016301">
    <property type="term" value="F:kinase activity"/>
    <property type="evidence" value="ECO:0007669"/>
    <property type="project" value="UniProtKB-KW"/>
</dbReference>
<dbReference type="GO" id="GO:0016773">
    <property type="term" value="F:phosphotransferase activity, alcohol group as acceptor"/>
    <property type="evidence" value="ECO:0007669"/>
    <property type="project" value="UniProtKB-UniRule"/>
</dbReference>
<dbReference type="GO" id="GO:0097175">
    <property type="term" value="P:1,6-anhydro-N-acetyl-beta-muramic acid catabolic process"/>
    <property type="evidence" value="ECO:0007669"/>
    <property type="project" value="UniProtKB-UniRule"/>
</dbReference>
<dbReference type="GO" id="GO:0006040">
    <property type="term" value="P:amino sugar metabolic process"/>
    <property type="evidence" value="ECO:0007669"/>
    <property type="project" value="InterPro"/>
</dbReference>
<dbReference type="GO" id="GO:0009254">
    <property type="term" value="P:peptidoglycan turnover"/>
    <property type="evidence" value="ECO:0007669"/>
    <property type="project" value="UniProtKB-UniRule"/>
</dbReference>
<dbReference type="CDD" id="cd24050">
    <property type="entry name" value="ASKHA_NBD_ANMK"/>
    <property type="match status" value="1"/>
</dbReference>
<dbReference type="Gene3D" id="3.30.420.40">
    <property type="match status" value="2"/>
</dbReference>
<dbReference type="HAMAP" id="MF_01270">
    <property type="entry name" value="AnhMurNAc_kinase"/>
    <property type="match status" value="1"/>
</dbReference>
<dbReference type="InterPro" id="IPR005338">
    <property type="entry name" value="Anhydro_N_Ac-Mur_kinase"/>
</dbReference>
<dbReference type="InterPro" id="IPR043129">
    <property type="entry name" value="ATPase_NBD"/>
</dbReference>
<dbReference type="NCBIfam" id="NF007139">
    <property type="entry name" value="PRK09585.1-3"/>
    <property type="match status" value="1"/>
</dbReference>
<dbReference type="NCBIfam" id="NF007148">
    <property type="entry name" value="PRK09585.3-2"/>
    <property type="match status" value="1"/>
</dbReference>
<dbReference type="PANTHER" id="PTHR30605">
    <property type="entry name" value="ANHYDRO-N-ACETYLMURAMIC ACID KINASE"/>
    <property type="match status" value="1"/>
</dbReference>
<dbReference type="PANTHER" id="PTHR30605:SF0">
    <property type="entry name" value="ANHYDRO-N-ACETYLMURAMIC ACID KINASE"/>
    <property type="match status" value="1"/>
</dbReference>
<dbReference type="Pfam" id="PF03702">
    <property type="entry name" value="AnmK"/>
    <property type="match status" value="1"/>
</dbReference>
<dbReference type="SUPFAM" id="SSF53067">
    <property type="entry name" value="Actin-like ATPase domain"/>
    <property type="match status" value="1"/>
</dbReference>
<protein>
    <recommendedName>
        <fullName evidence="1">Anhydro-N-acetylmuramic acid kinase</fullName>
        <ecNumber evidence="1">2.7.1.170</ecNumber>
    </recommendedName>
    <alternativeName>
        <fullName evidence="1">AnhMurNAc kinase</fullName>
    </alternativeName>
</protein>
<gene>
    <name evidence="1" type="primary">anmK</name>
    <name type="ordered locus">XC_3927</name>
</gene>
<reference key="1">
    <citation type="journal article" date="2005" name="Genome Res.">
        <title>Comparative and functional genomic analyses of the pathogenicity of phytopathogen Xanthomonas campestris pv. campestris.</title>
        <authorList>
            <person name="Qian W."/>
            <person name="Jia Y."/>
            <person name="Ren S.-X."/>
            <person name="He Y.-Q."/>
            <person name="Feng J.-X."/>
            <person name="Lu L.-F."/>
            <person name="Sun Q."/>
            <person name="Ying G."/>
            <person name="Tang D.-J."/>
            <person name="Tang H."/>
            <person name="Wu W."/>
            <person name="Hao P."/>
            <person name="Wang L."/>
            <person name="Jiang B.-L."/>
            <person name="Zeng S."/>
            <person name="Gu W.-Y."/>
            <person name="Lu G."/>
            <person name="Rong L."/>
            <person name="Tian Y."/>
            <person name="Yao Z."/>
            <person name="Fu G."/>
            <person name="Chen B."/>
            <person name="Fang R."/>
            <person name="Qiang B."/>
            <person name="Chen Z."/>
            <person name="Zhao G.-P."/>
            <person name="Tang J.-L."/>
            <person name="He C."/>
        </authorList>
    </citation>
    <scope>NUCLEOTIDE SEQUENCE [LARGE SCALE GENOMIC DNA]</scope>
    <source>
        <strain>8004</strain>
    </source>
</reference>
<feature type="chain" id="PRO_0000250085" description="Anhydro-N-acetylmuramic acid kinase">
    <location>
        <begin position="1"/>
        <end position="377"/>
    </location>
</feature>
<feature type="binding site" evidence="1">
    <location>
        <begin position="18"/>
        <end position="25"/>
    </location>
    <ligand>
        <name>ATP</name>
        <dbReference type="ChEBI" id="CHEBI:30616"/>
    </ligand>
</feature>
<comment type="function">
    <text evidence="1">Catalyzes the specific phosphorylation of 1,6-anhydro-N-acetylmuramic acid (anhMurNAc) with the simultaneous cleavage of the 1,6-anhydro ring, generating MurNAc-6-P. Is required for the utilization of anhMurNAc either imported from the medium or derived from its own cell wall murein, and thus plays a role in cell wall recycling.</text>
</comment>
<comment type="catalytic activity">
    <reaction evidence="1">
        <text>1,6-anhydro-N-acetyl-beta-muramate + ATP + H2O = N-acetyl-D-muramate 6-phosphate + ADP + H(+)</text>
        <dbReference type="Rhea" id="RHEA:24952"/>
        <dbReference type="ChEBI" id="CHEBI:15377"/>
        <dbReference type="ChEBI" id="CHEBI:15378"/>
        <dbReference type="ChEBI" id="CHEBI:30616"/>
        <dbReference type="ChEBI" id="CHEBI:58690"/>
        <dbReference type="ChEBI" id="CHEBI:58722"/>
        <dbReference type="ChEBI" id="CHEBI:456216"/>
        <dbReference type="EC" id="2.7.1.170"/>
    </reaction>
</comment>
<comment type="pathway">
    <text evidence="1">Amino-sugar metabolism; 1,6-anhydro-N-acetylmuramate degradation.</text>
</comment>
<comment type="pathway">
    <text evidence="1">Cell wall biogenesis; peptidoglycan recycling.</text>
</comment>
<comment type="similarity">
    <text evidence="1">Belongs to the anhydro-N-acetylmuramic acid kinase family.</text>
</comment>